<protein>
    <recommendedName>
        <fullName>CDGSH iron-sulfur domain-containing protein 2 homolog</fullName>
    </recommendedName>
</protein>
<dbReference type="EMBL" id="CH902617">
    <property type="protein sequence ID" value="EDV43268.1"/>
    <property type="molecule type" value="Genomic_DNA"/>
</dbReference>
<dbReference type="SMR" id="B3M1H7"/>
<dbReference type="FunCoup" id="B3M1H7">
    <property type="interactions" value="1403"/>
</dbReference>
<dbReference type="STRING" id="7217.B3M1H7"/>
<dbReference type="EnsemblMetazoa" id="FBtr0121308">
    <property type="protein sequence ID" value="FBpp0119800"/>
    <property type="gene ID" value="FBgn0093629"/>
</dbReference>
<dbReference type="EnsemblMetazoa" id="XM_001954671.4">
    <property type="protein sequence ID" value="XP_001954707.1"/>
    <property type="gene ID" value="LOC6499403"/>
</dbReference>
<dbReference type="GeneID" id="6499403"/>
<dbReference type="KEGG" id="dan:6499403"/>
<dbReference type="CTD" id="493856"/>
<dbReference type="eggNOG" id="KOG3461">
    <property type="taxonomic scope" value="Eukaryota"/>
</dbReference>
<dbReference type="HOGENOM" id="CLU_132293_1_0_1"/>
<dbReference type="InParanoid" id="B3M1H7"/>
<dbReference type="OMA" id="QIRKHEP"/>
<dbReference type="OrthoDB" id="449252at2759"/>
<dbReference type="PhylomeDB" id="B3M1H7"/>
<dbReference type="Proteomes" id="UP000007801">
    <property type="component" value="Unassembled WGS sequence"/>
</dbReference>
<dbReference type="GO" id="GO:0005789">
    <property type="term" value="C:endoplasmic reticulum membrane"/>
    <property type="evidence" value="ECO:0007669"/>
    <property type="project" value="UniProtKB-SubCell"/>
</dbReference>
<dbReference type="GO" id="GO:0005741">
    <property type="term" value="C:mitochondrial outer membrane"/>
    <property type="evidence" value="ECO:0007669"/>
    <property type="project" value="EnsemblMetazoa"/>
</dbReference>
<dbReference type="GO" id="GO:0051537">
    <property type="term" value="F:2 iron, 2 sulfur cluster binding"/>
    <property type="evidence" value="ECO:0007669"/>
    <property type="project" value="UniProtKB-KW"/>
</dbReference>
<dbReference type="GO" id="GO:0046872">
    <property type="term" value="F:metal ion binding"/>
    <property type="evidence" value="ECO:0007669"/>
    <property type="project" value="UniProtKB-KW"/>
</dbReference>
<dbReference type="GO" id="GO:0006879">
    <property type="term" value="P:intracellular iron ion homeostasis"/>
    <property type="evidence" value="ECO:0007669"/>
    <property type="project" value="EnsemblMetazoa"/>
</dbReference>
<dbReference type="GO" id="GO:0006839">
    <property type="term" value="P:mitochondrial transport"/>
    <property type="evidence" value="ECO:0007669"/>
    <property type="project" value="EnsemblMetazoa"/>
</dbReference>
<dbReference type="GO" id="GO:0010506">
    <property type="term" value="P:regulation of autophagy"/>
    <property type="evidence" value="ECO:0007669"/>
    <property type="project" value="InterPro"/>
</dbReference>
<dbReference type="FunFam" id="3.40.5.90:FF:000001">
    <property type="entry name" value="CDGSH iron-sulfur domain-containing protein 1"/>
    <property type="match status" value="1"/>
</dbReference>
<dbReference type="Gene3D" id="3.40.5.90">
    <property type="entry name" value="CDGSH iron-sulfur domain, mitoNEET-type"/>
    <property type="match status" value="1"/>
</dbReference>
<dbReference type="InterPro" id="IPR045131">
    <property type="entry name" value="CISD1/2"/>
</dbReference>
<dbReference type="InterPro" id="IPR018967">
    <property type="entry name" value="FeS-contain_CDGSH-typ"/>
</dbReference>
<dbReference type="InterPro" id="IPR019610">
    <property type="entry name" value="FeS-contain_mitoNEET_N"/>
</dbReference>
<dbReference type="InterPro" id="IPR042216">
    <property type="entry name" value="MitoNEET_CISD"/>
</dbReference>
<dbReference type="PANTHER" id="PTHR13680">
    <property type="entry name" value="CDGSH IRON-SULFUR DOMAIN-CONTAINING PROTEIN 1"/>
    <property type="match status" value="1"/>
</dbReference>
<dbReference type="PANTHER" id="PTHR13680:SF5">
    <property type="entry name" value="CDGSH IRON-SULFUR DOMAIN-CONTAINING PROTEIN 1"/>
    <property type="match status" value="1"/>
</dbReference>
<dbReference type="Pfam" id="PF10660">
    <property type="entry name" value="MitoNEET_N"/>
    <property type="match status" value="1"/>
</dbReference>
<dbReference type="Pfam" id="PF09360">
    <property type="entry name" value="zf-CDGSH"/>
    <property type="match status" value="1"/>
</dbReference>
<dbReference type="SMART" id="SM00704">
    <property type="entry name" value="ZnF_CDGSH"/>
    <property type="match status" value="1"/>
</dbReference>
<accession>B3M1H7</accession>
<sequence length="134" mass="14710">MESLSQLVKSTLPNYLSNLPIPDSVGGWFKLSFKDWLALIPPTVVVAGIGYTGYLAFCPAAQARCSATKSGRCNNQIRKHEPKVVDTIDVEDIADKAAFCRCWKSKNWPYCDGSHGEHNKLTGDNVGPVVVKKQ</sequence>
<keyword id="KW-0001">2Fe-2S</keyword>
<keyword id="KW-0256">Endoplasmic reticulum</keyword>
<keyword id="KW-0408">Iron</keyword>
<keyword id="KW-0411">Iron-sulfur</keyword>
<keyword id="KW-0472">Membrane</keyword>
<keyword id="KW-0479">Metal-binding</keyword>
<keyword id="KW-1185">Reference proteome</keyword>
<keyword id="KW-0812">Transmembrane</keyword>
<keyword id="KW-1133">Transmembrane helix</keyword>
<proteinExistence type="inferred from homology"/>
<gene>
    <name evidence="2" type="primary">Cisd2</name>
    <name type="ORF">GF16608</name>
</gene>
<comment type="cofactor">
    <cofactor evidence="1">
        <name>[2Fe-2S] cluster</name>
        <dbReference type="ChEBI" id="CHEBI:190135"/>
    </cofactor>
    <text evidence="1">Binds 1 [2Fe-2S] cluster.</text>
</comment>
<comment type="subcellular location">
    <subcellularLocation>
        <location evidence="4">Endoplasmic reticulum membrane</location>
        <topology evidence="4">Single-pass membrane protein</topology>
    </subcellularLocation>
</comment>
<comment type="similarity">
    <text evidence="4">Belongs to the CISD protein family. CISD2 subfamily.</text>
</comment>
<reference key="1">
    <citation type="journal article" date="2007" name="Nature">
        <title>Evolution of genes and genomes on the Drosophila phylogeny.</title>
        <authorList>
            <consortium name="Drosophila 12 genomes consortium"/>
        </authorList>
    </citation>
    <scope>NUCLEOTIDE SEQUENCE [LARGE SCALE GENOMIC DNA]</scope>
    <source>
        <strain>Tucson 14024-0371.13</strain>
    </source>
</reference>
<feature type="chain" id="PRO_0000392023" description="CDGSH iron-sulfur domain-containing protein 2 homolog">
    <location>
        <begin position="1"/>
        <end position="134"/>
    </location>
</feature>
<feature type="topological domain" description="Lumenal" evidence="3">
    <location>
        <begin position="1"/>
        <end position="35"/>
    </location>
</feature>
<feature type="transmembrane region" description="Helical" evidence="3">
    <location>
        <begin position="36"/>
        <end position="58"/>
    </location>
</feature>
<feature type="topological domain" description="Cytoplasmic" evidence="3">
    <location>
        <begin position="59"/>
        <end position="134"/>
    </location>
</feature>
<feature type="binding site" evidence="1">
    <location>
        <position position="100"/>
    </location>
    <ligand>
        <name>[2Fe-2S] cluster</name>
        <dbReference type="ChEBI" id="CHEBI:190135"/>
    </ligand>
</feature>
<feature type="binding site" evidence="1">
    <location>
        <position position="102"/>
    </location>
    <ligand>
        <name>[2Fe-2S] cluster</name>
        <dbReference type="ChEBI" id="CHEBI:190135"/>
    </ligand>
</feature>
<feature type="binding site" evidence="1">
    <location>
        <position position="111"/>
    </location>
    <ligand>
        <name>[2Fe-2S] cluster</name>
        <dbReference type="ChEBI" id="CHEBI:190135"/>
    </ligand>
</feature>
<feature type="binding site" evidence="1">
    <location>
        <position position="115"/>
    </location>
    <ligand>
        <name>[2Fe-2S] cluster</name>
        <dbReference type="ChEBI" id="CHEBI:190135"/>
    </ligand>
</feature>
<evidence type="ECO:0000250" key="1"/>
<evidence type="ECO:0000250" key="2">
    <source>
        <dbReference type="UniProtKB" id="Q9VAM6"/>
    </source>
</evidence>
<evidence type="ECO:0000255" key="3"/>
<evidence type="ECO:0000305" key="4"/>
<name>CISD2_DROAN</name>
<organism>
    <name type="scientific">Drosophila ananassae</name>
    <name type="common">Fruit fly</name>
    <dbReference type="NCBI Taxonomy" id="7217"/>
    <lineage>
        <taxon>Eukaryota</taxon>
        <taxon>Metazoa</taxon>
        <taxon>Ecdysozoa</taxon>
        <taxon>Arthropoda</taxon>
        <taxon>Hexapoda</taxon>
        <taxon>Insecta</taxon>
        <taxon>Pterygota</taxon>
        <taxon>Neoptera</taxon>
        <taxon>Endopterygota</taxon>
        <taxon>Diptera</taxon>
        <taxon>Brachycera</taxon>
        <taxon>Muscomorpha</taxon>
        <taxon>Ephydroidea</taxon>
        <taxon>Drosophilidae</taxon>
        <taxon>Drosophila</taxon>
        <taxon>Sophophora</taxon>
    </lineage>
</organism>